<accession>A2T6E3</accession>
<dbReference type="EMBL" id="DQ977060">
    <property type="protein sequence ID" value="ABM87991.1"/>
    <property type="molecule type" value="Genomic_DNA"/>
</dbReference>
<dbReference type="SMR" id="A2T6E3"/>
<dbReference type="STRING" id="9545.ENSMNEP00000045571"/>
<dbReference type="Proteomes" id="UP000233120">
    <property type="component" value="Unassembled WGS sequence"/>
</dbReference>
<dbReference type="GO" id="GO:0005634">
    <property type="term" value="C:nucleus"/>
    <property type="evidence" value="ECO:0007669"/>
    <property type="project" value="UniProtKB-SubCell"/>
</dbReference>
<dbReference type="GO" id="GO:0000981">
    <property type="term" value="F:DNA-binding transcription factor activity, RNA polymerase II-specific"/>
    <property type="evidence" value="ECO:0007669"/>
    <property type="project" value="TreeGrafter"/>
</dbReference>
<dbReference type="GO" id="GO:0000978">
    <property type="term" value="F:RNA polymerase II cis-regulatory region sequence-specific DNA binding"/>
    <property type="evidence" value="ECO:0007669"/>
    <property type="project" value="TreeGrafter"/>
</dbReference>
<dbReference type="GO" id="GO:0008270">
    <property type="term" value="F:zinc ion binding"/>
    <property type="evidence" value="ECO:0007669"/>
    <property type="project" value="UniProtKB-KW"/>
</dbReference>
<dbReference type="CDD" id="cd07936">
    <property type="entry name" value="SCAN"/>
    <property type="match status" value="1"/>
</dbReference>
<dbReference type="FunFam" id="3.30.160.60:FF:000029">
    <property type="entry name" value="GLI family zinc finger 4"/>
    <property type="match status" value="1"/>
</dbReference>
<dbReference type="FunFam" id="3.30.160.60:FF:000056">
    <property type="entry name" value="Zinc finger and SCAN domain-containing 20"/>
    <property type="match status" value="1"/>
</dbReference>
<dbReference type="FunFam" id="3.30.160.60:FF:001087">
    <property type="entry name" value="Zinc finger and SCAN domain-containing protein 26"/>
    <property type="match status" value="1"/>
</dbReference>
<dbReference type="FunFam" id="3.30.160.60:FF:000557">
    <property type="entry name" value="zinc finger and SCAN domain-containing protein 29"/>
    <property type="match status" value="1"/>
</dbReference>
<dbReference type="FunFam" id="3.30.160.60:FF:000144">
    <property type="entry name" value="zinc finger protein 181 isoform X1"/>
    <property type="match status" value="1"/>
</dbReference>
<dbReference type="FunFam" id="1.10.4020.10:FF:000001">
    <property type="entry name" value="zinc finger protein 263 isoform X1"/>
    <property type="match status" value="1"/>
</dbReference>
<dbReference type="FunFam" id="3.30.160.60:FF:000970">
    <property type="entry name" value="zinc finger protein 333 isoform X2"/>
    <property type="match status" value="1"/>
</dbReference>
<dbReference type="FunFam" id="3.30.160.60:FF:002343">
    <property type="entry name" value="Zinc finger protein 33A"/>
    <property type="match status" value="2"/>
</dbReference>
<dbReference type="FunFam" id="3.30.160.60:FF:000070">
    <property type="entry name" value="zinc finger protein 689 isoform X1"/>
    <property type="match status" value="1"/>
</dbReference>
<dbReference type="FunFam" id="3.30.160.60:FF:000176">
    <property type="entry name" value="zinc finger protein 70"/>
    <property type="match status" value="1"/>
</dbReference>
<dbReference type="FunFam" id="3.30.160.60:FF:000330">
    <property type="entry name" value="Zinc finger with KRAB and SCAN domains 1"/>
    <property type="match status" value="1"/>
</dbReference>
<dbReference type="Gene3D" id="3.30.160.60">
    <property type="entry name" value="Classic Zinc Finger"/>
    <property type="match status" value="11"/>
</dbReference>
<dbReference type="Gene3D" id="1.10.4020.10">
    <property type="entry name" value="DNA breaking-rejoining enzymes"/>
    <property type="match status" value="1"/>
</dbReference>
<dbReference type="InterPro" id="IPR003309">
    <property type="entry name" value="SCAN_dom"/>
</dbReference>
<dbReference type="InterPro" id="IPR038269">
    <property type="entry name" value="SCAN_sf"/>
</dbReference>
<dbReference type="InterPro" id="IPR036236">
    <property type="entry name" value="Znf_C2H2_sf"/>
</dbReference>
<dbReference type="InterPro" id="IPR013087">
    <property type="entry name" value="Znf_C2H2_type"/>
</dbReference>
<dbReference type="PANTHER" id="PTHR23226">
    <property type="entry name" value="ZINC FINGER AND SCAN DOMAIN-CONTAINING"/>
    <property type="match status" value="1"/>
</dbReference>
<dbReference type="PANTHER" id="PTHR23226:SF76">
    <property type="entry name" value="ZINC FINGER AND SCAN DOMAIN-CONTAINING PROTEIN 23"/>
    <property type="match status" value="1"/>
</dbReference>
<dbReference type="Pfam" id="PF02023">
    <property type="entry name" value="SCAN"/>
    <property type="match status" value="1"/>
</dbReference>
<dbReference type="Pfam" id="PF00096">
    <property type="entry name" value="zf-C2H2"/>
    <property type="match status" value="10"/>
</dbReference>
<dbReference type="SMART" id="SM00431">
    <property type="entry name" value="SCAN"/>
    <property type="match status" value="1"/>
</dbReference>
<dbReference type="SMART" id="SM00355">
    <property type="entry name" value="ZnF_C2H2"/>
    <property type="match status" value="10"/>
</dbReference>
<dbReference type="SUPFAM" id="SSF57667">
    <property type="entry name" value="beta-beta-alpha zinc fingers"/>
    <property type="match status" value="6"/>
</dbReference>
<dbReference type="SUPFAM" id="SSF47353">
    <property type="entry name" value="Retrovirus capsid dimerization domain-like"/>
    <property type="match status" value="1"/>
</dbReference>
<dbReference type="PROSITE" id="PS50804">
    <property type="entry name" value="SCAN_BOX"/>
    <property type="match status" value="1"/>
</dbReference>
<dbReference type="PROSITE" id="PS00028">
    <property type="entry name" value="ZINC_FINGER_C2H2_1"/>
    <property type="match status" value="9"/>
</dbReference>
<dbReference type="PROSITE" id="PS50157">
    <property type="entry name" value="ZINC_FINGER_C2H2_2"/>
    <property type="match status" value="11"/>
</dbReference>
<sequence>MASTWAIQAHMDQDERLEVKIEEKKYTTRQDWDLHKNNTHSREVFRQYFRQFCYQETSGPREALSRLRELCHQWLRPETHTKEQILELLVLEQFLTILPEELQAWVQEQHPESGEEVVTVLEDLERELDEPGEQVSAHTGEHEMFLQKMVPLGKEGEPSMPLQSMKAQLKYESPELESQQEQVLDVETGNEYGNLKQEVSEEMKPHGNTSSKFENDMSQSARCGETHEPEEITEEPSACSREDKQPTCDENGVSLTENSDHTEHQRICPGEKSYGCDDCGKTFSQHSHLTEHQRIHTGDRPYKCEECGKAFRGRTVLIRHKIIHTGEKPYKCNECGKAFGRWSALNQHQRLHTGEKHYHCNDCGKAFSQKAGLFHHIKIHTRDKPYQCTQCNKSFSRRSILTQHQGVHTGAKPYECNECGKAFVYNSSLVSHQEIHHKEKCYQCKECGKSFSQSGLIQHQRIHTGEKPYKCEVCEKAFIQRTSLTEHQRIHTGERPYKCDKCGKAFTQRSVLTEHQRIHTGERPYKCDECGNAFRGITSLIQHQRIHTGEKPYQCDECGKAFRQRRKTSYKEILLKNHSEPQAGVNLLLSSLIPEWQSCCRKDL</sequence>
<evidence type="ECO:0000250" key="1">
    <source>
        <dbReference type="UniProtKB" id="O43309"/>
    </source>
</evidence>
<evidence type="ECO:0000255" key="2">
    <source>
        <dbReference type="PROSITE-ProRule" id="PRU00042"/>
    </source>
</evidence>
<evidence type="ECO:0000255" key="3">
    <source>
        <dbReference type="PROSITE-ProRule" id="PRU00187"/>
    </source>
</evidence>
<evidence type="ECO:0000256" key="4">
    <source>
        <dbReference type="SAM" id="MobiDB-lite"/>
    </source>
</evidence>
<evidence type="ECO:0000305" key="5"/>
<protein>
    <recommendedName>
        <fullName>Zinc finger and SCAN domain-containing protein 12</fullName>
    </recommendedName>
    <alternativeName>
        <fullName>Zinc finger protein 96</fullName>
    </alternativeName>
</protein>
<keyword id="KW-0238">DNA-binding</keyword>
<keyword id="KW-1017">Isopeptide bond</keyword>
<keyword id="KW-0479">Metal-binding</keyword>
<keyword id="KW-0539">Nucleus</keyword>
<keyword id="KW-1185">Reference proteome</keyword>
<keyword id="KW-0677">Repeat</keyword>
<keyword id="KW-0804">Transcription</keyword>
<keyword id="KW-0805">Transcription regulation</keyword>
<keyword id="KW-0832">Ubl conjugation</keyword>
<keyword id="KW-0862">Zinc</keyword>
<keyword id="KW-0863">Zinc-finger</keyword>
<feature type="chain" id="PRO_0000285483" description="Zinc finger and SCAN domain-containing protein 12">
    <location>
        <begin position="1"/>
        <end position="604"/>
    </location>
</feature>
<feature type="domain" description="SCAN box" evidence="3">
    <location>
        <begin position="46"/>
        <end position="128"/>
    </location>
</feature>
<feature type="zinc finger region" description="C2H2-type 1" evidence="2">
    <location>
        <begin position="274"/>
        <end position="296"/>
    </location>
</feature>
<feature type="zinc finger region" description="C2H2-type 2" evidence="2">
    <location>
        <begin position="302"/>
        <end position="324"/>
    </location>
</feature>
<feature type="zinc finger region" description="C2H2-type 3" evidence="2">
    <location>
        <begin position="330"/>
        <end position="352"/>
    </location>
</feature>
<feature type="zinc finger region" description="C2H2-type 4" evidence="2">
    <location>
        <begin position="358"/>
        <end position="380"/>
    </location>
</feature>
<feature type="zinc finger region" description="C2H2-type 5" evidence="2">
    <location>
        <begin position="386"/>
        <end position="408"/>
    </location>
</feature>
<feature type="zinc finger region" description="C2H2-type 6" evidence="2">
    <location>
        <begin position="414"/>
        <end position="436"/>
    </location>
</feature>
<feature type="zinc finger region" description="C2H2-type 7" evidence="2">
    <location>
        <begin position="442"/>
        <end position="463"/>
    </location>
</feature>
<feature type="zinc finger region" description="C2H2-type 8" evidence="2">
    <location>
        <begin position="469"/>
        <end position="491"/>
    </location>
</feature>
<feature type="zinc finger region" description="C2H2-type 9" evidence="2">
    <location>
        <begin position="497"/>
        <end position="519"/>
    </location>
</feature>
<feature type="zinc finger region" description="C2H2-type 10" evidence="2">
    <location>
        <begin position="525"/>
        <end position="547"/>
    </location>
</feature>
<feature type="zinc finger region" description="C2H2-type 11; degenerate" evidence="2">
    <location>
        <begin position="553"/>
        <end position="578"/>
    </location>
</feature>
<feature type="region of interest" description="Disordered" evidence="4">
    <location>
        <begin position="204"/>
        <end position="267"/>
    </location>
</feature>
<feature type="compositionally biased region" description="Polar residues" evidence="4">
    <location>
        <begin position="207"/>
        <end position="221"/>
    </location>
</feature>
<feature type="cross-link" description="Glycyl lysine isopeptide (Lys-Gly) (interchain with G-Cter in SUMO2)" evidence="1">
    <location>
        <position position="20"/>
    </location>
</feature>
<feature type="cross-link" description="Glycyl lysine isopeptide (Lys-Gly) (interchain with G-Cter in SUMO2)" evidence="1">
    <location>
        <position position="25"/>
    </location>
</feature>
<feature type="cross-link" description="Glycyl lysine isopeptide (Lys-Gly) (interchain with G-Cter in SUMO2)" evidence="1">
    <location>
        <position position="196"/>
    </location>
</feature>
<gene>
    <name type="primary">ZSCAN12</name>
    <name type="synonym">ZNF96</name>
</gene>
<proteinExistence type="inferred from homology"/>
<reference key="1">
    <citation type="submission" date="2006-08" db="EMBL/GenBank/DDBJ databases">
        <title>Positive selection in transcription factor genes on the human lineage.</title>
        <authorList>
            <person name="Nickel G.C."/>
            <person name="Tefft D.L."/>
            <person name="Trevarthen K."/>
            <person name="Funt J."/>
            <person name="Adams M.D."/>
        </authorList>
    </citation>
    <scope>NUCLEOTIDE SEQUENCE [GENOMIC DNA]</scope>
</reference>
<name>ZSC12_MACNE</name>
<organism>
    <name type="scientific">Macaca nemestrina</name>
    <name type="common">Pig-tailed macaque</name>
    <dbReference type="NCBI Taxonomy" id="9545"/>
    <lineage>
        <taxon>Eukaryota</taxon>
        <taxon>Metazoa</taxon>
        <taxon>Chordata</taxon>
        <taxon>Craniata</taxon>
        <taxon>Vertebrata</taxon>
        <taxon>Euteleostomi</taxon>
        <taxon>Mammalia</taxon>
        <taxon>Eutheria</taxon>
        <taxon>Euarchontoglires</taxon>
        <taxon>Primates</taxon>
        <taxon>Haplorrhini</taxon>
        <taxon>Catarrhini</taxon>
        <taxon>Cercopithecidae</taxon>
        <taxon>Cercopithecinae</taxon>
        <taxon>Macaca</taxon>
    </lineage>
</organism>
<comment type="function">
    <text>May be involved in transcriptional regulation.</text>
</comment>
<comment type="subcellular location">
    <subcellularLocation>
        <location evidence="3">Nucleus</location>
    </subcellularLocation>
</comment>
<comment type="similarity">
    <text evidence="5">Belongs to the krueppel C2H2-type zinc-finger protein family.</text>
</comment>